<protein>
    <recommendedName>
        <fullName evidence="1">Cell division protein SepF</fullName>
    </recommendedName>
</protein>
<comment type="function">
    <text evidence="1">Cell division protein that is part of the divisome complex and is recruited early to the Z-ring. Probably stimulates Z-ring formation, perhaps through the cross-linking of FtsZ protofilaments. Its function overlaps with FtsA.</text>
</comment>
<comment type="subunit">
    <text evidence="1">Homodimer. Interacts with FtsZ.</text>
</comment>
<comment type="subcellular location">
    <subcellularLocation>
        <location evidence="1">Cytoplasm</location>
    </subcellularLocation>
    <text evidence="1">Localizes to the division site, in a FtsZ-dependent manner.</text>
</comment>
<comment type="similarity">
    <text evidence="1">Belongs to the SepF family.</text>
</comment>
<comment type="sequence caution" evidence="3">
    <conflict type="erroneous initiation">
        <sequence resource="EMBL-CDS" id="ABD10798"/>
    </conflict>
</comment>
<accession>Q2JD44</accession>
<keyword id="KW-0131">Cell cycle</keyword>
<keyword id="KW-0132">Cell division</keyword>
<keyword id="KW-0963">Cytoplasm</keyword>
<keyword id="KW-1185">Reference proteome</keyword>
<keyword id="KW-0717">Septation</keyword>
<reference key="1">
    <citation type="journal article" date="2007" name="Genome Res.">
        <title>Genome characteristics of facultatively symbiotic Frankia sp. strains reflect host range and host plant biogeography.</title>
        <authorList>
            <person name="Normand P."/>
            <person name="Lapierre P."/>
            <person name="Tisa L.S."/>
            <person name="Gogarten J.P."/>
            <person name="Alloisio N."/>
            <person name="Bagnarol E."/>
            <person name="Bassi C.A."/>
            <person name="Berry A.M."/>
            <person name="Bickhart D.M."/>
            <person name="Choisne N."/>
            <person name="Couloux A."/>
            <person name="Cournoyer B."/>
            <person name="Cruveiller S."/>
            <person name="Daubin V."/>
            <person name="Demange N."/>
            <person name="Francino M.P."/>
            <person name="Goltsman E."/>
            <person name="Huang Y."/>
            <person name="Kopp O.R."/>
            <person name="Labarre L."/>
            <person name="Lapidus A."/>
            <person name="Lavire C."/>
            <person name="Marechal J."/>
            <person name="Martinez M."/>
            <person name="Mastronunzio J.E."/>
            <person name="Mullin B.C."/>
            <person name="Niemann J."/>
            <person name="Pujic P."/>
            <person name="Rawnsley T."/>
            <person name="Rouy Z."/>
            <person name="Schenowitz C."/>
            <person name="Sellstedt A."/>
            <person name="Tavares F."/>
            <person name="Tomkins J.P."/>
            <person name="Vallenet D."/>
            <person name="Valverde C."/>
            <person name="Wall L.G."/>
            <person name="Wang Y."/>
            <person name="Medigue C."/>
            <person name="Benson D.R."/>
        </authorList>
    </citation>
    <scope>NUCLEOTIDE SEQUENCE [LARGE SCALE GENOMIC DNA]</scope>
    <source>
        <strain>DSM 45818 / CECT 9043 / HFP020203 / CcI3</strain>
    </source>
</reference>
<feature type="chain" id="PRO_0000334010" description="Cell division protein SepF">
    <location>
        <begin position="1"/>
        <end position="180"/>
    </location>
</feature>
<feature type="region of interest" description="Disordered" evidence="2">
    <location>
        <begin position="21"/>
        <end position="40"/>
    </location>
</feature>
<feature type="compositionally biased region" description="Basic and acidic residues" evidence="2">
    <location>
        <begin position="27"/>
        <end position="40"/>
    </location>
</feature>
<gene>
    <name evidence="1" type="primary">sepF</name>
    <name type="ordered locus">Francci3_1421</name>
</gene>
<dbReference type="EMBL" id="CP000249">
    <property type="protein sequence ID" value="ABD10798.1"/>
    <property type="status" value="ALT_INIT"/>
    <property type="molecule type" value="Genomic_DNA"/>
</dbReference>
<dbReference type="RefSeq" id="WP_023840535.1">
    <property type="nucleotide sequence ID" value="NZ_JENI01000011.1"/>
</dbReference>
<dbReference type="SMR" id="Q2JD44"/>
<dbReference type="STRING" id="106370.Francci3_1421"/>
<dbReference type="KEGG" id="fra:Francci3_1421"/>
<dbReference type="eggNOG" id="COG1799">
    <property type="taxonomic scope" value="Bacteria"/>
</dbReference>
<dbReference type="HOGENOM" id="CLU_078499_0_0_11"/>
<dbReference type="OrthoDB" id="3731101at2"/>
<dbReference type="Proteomes" id="UP000001937">
    <property type="component" value="Chromosome"/>
</dbReference>
<dbReference type="GO" id="GO:0005737">
    <property type="term" value="C:cytoplasm"/>
    <property type="evidence" value="ECO:0007669"/>
    <property type="project" value="UniProtKB-SubCell"/>
</dbReference>
<dbReference type="GO" id="GO:0000917">
    <property type="term" value="P:division septum assembly"/>
    <property type="evidence" value="ECO:0007669"/>
    <property type="project" value="UniProtKB-KW"/>
</dbReference>
<dbReference type="GO" id="GO:0043093">
    <property type="term" value="P:FtsZ-dependent cytokinesis"/>
    <property type="evidence" value="ECO:0007669"/>
    <property type="project" value="UniProtKB-UniRule"/>
</dbReference>
<dbReference type="Gene3D" id="3.30.110.150">
    <property type="entry name" value="SepF-like protein"/>
    <property type="match status" value="1"/>
</dbReference>
<dbReference type="HAMAP" id="MF_01197">
    <property type="entry name" value="SepF"/>
    <property type="match status" value="1"/>
</dbReference>
<dbReference type="InterPro" id="IPR023052">
    <property type="entry name" value="Cell_div_SepF"/>
</dbReference>
<dbReference type="InterPro" id="IPR007561">
    <property type="entry name" value="Cell_div_SepF/SepF-rel"/>
</dbReference>
<dbReference type="InterPro" id="IPR038594">
    <property type="entry name" value="SepF-like_sf"/>
</dbReference>
<dbReference type="PANTHER" id="PTHR35798">
    <property type="entry name" value="CELL DIVISION PROTEIN SEPF"/>
    <property type="match status" value="1"/>
</dbReference>
<dbReference type="PANTHER" id="PTHR35798:SF1">
    <property type="entry name" value="CELL DIVISION PROTEIN SEPF"/>
    <property type="match status" value="1"/>
</dbReference>
<dbReference type="Pfam" id="PF04472">
    <property type="entry name" value="SepF"/>
    <property type="match status" value="1"/>
</dbReference>
<organism>
    <name type="scientific">Frankia casuarinae (strain DSM 45818 / CECT 9043 / HFP020203 / CcI3)</name>
    <dbReference type="NCBI Taxonomy" id="106370"/>
    <lineage>
        <taxon>Bacteria</taxon>
        <taxon>Bacillati</taxon>
        <taxon>Actinomycetota</taxon>
        <taxon>Actinomycetes</taxon>
        <taxon>Frankiales</taxon>
        <taxon>Frankiaceae</taxon>
        <taxon>Frankia</taxon>
    </lineage>
</organism>
<evidence type="ECO:0000255" key="1">
    <source>
        <dbReference type="HAMAP-Rule" id="MF_01197"/>
    </source>
</evidence>
<evidence type="ECO:0000256" key="2">
    <source>
        <dbReference type="SAM" id="MobiDB-lite"/>
    </source>
</evidence>
<evidence type="ECO:0000305" key="3"/>
<proteinExistence type="inferred from homology"/>
<sequence length="180" mass="20553">MGLGRRAMVYLGLAEEDEDYLDDDYDDGRAVGRDDRRAMHEPVPMDRTVRRIDAREEPVAMPRRPPVEPLRPAGPVPMRRVAAVEESHPYRITTLQPRSYNEARQIGEEFRDGTPVIMNLTDMDDADAKRLVDFAAGLIFGLRGDLEKVTNKVFLLSPHNVEVTETDKRRIREGGFYNQS</sequence>
<name>SEPF_FRACC</name>